<gene>
    <name evidence="1" type="primary">rpmC</name>
    <name type="ordered locus">RBAM_001490</name>
</gene>
<dbReference type="EMBL" id="CP000560">
    <property type="protein sequence ID" value="ABS72572.1"/>
    <property type="molecule type" value="Genomic_DNA"/>
</dbReference>
<dbReference type="RefSeq" id="WP_003156482.1">
    <property type="nucleotide sequence ID" value="NC_009725.2"/>
</dbReference>
<dbReference type="SMR" id="A7Z0P6"/>
<dbReference type="GeneID" id="93079288"/>
<dbReference type="KEGG" id="bay:RBAM_001490"/>
<dbReference type="HOGENOM" id="CLU_158491_5_2_9"/>
<dbReference type="Proteomes" id="UP000001120">
    <property type="component" value="Chromosome"/>
</dbReference>
<dbReference type="GO" id="GO:0022625">
    <property type="term" value="C:cytosolic large ribosomal subunit"/>
    <property type="evidence" value="ECO:0007669"/>
    <property type="project" value="TreeGrafter"/>
</dbReference>
<dbReference type="GO" id="GO:0003735">
    <property type="term" value="F:structural constituent of ribosome"/>
    <property type="evidence" value="ECO:0007669"/>
    <property type="project" value="InterPro"/>
</dbReference>
<dbReference type="GO" id="GO:0006412">
    <property type="term" value="P:translation"/>
    <property type="evidence" value="ECO:0007669"/>
    <property type="project" value="UniProtKB-UniRule"/>
</dbReference>
<dbReference type="CDD" id="cd00427">
    <property type="entry name" value="Ribosomal_L29_HIP"/>
    <property type="match status" value="1"/>
</dbReference>
<dbReference type="FunFam" id="1.10.287.310:FF:000001">
    <property type="entry name" value="50S ribosomal protein L29"/>
    <property type="match status" value="1"/>
</dbReference>
<dbReference type="Gene3D" id="1.10.287.310">
    <property type="match status" value="1"/>
</dbReference>
<dbReference type="HAMAP" id="MF_00374">
    <property type="entry name" value="Ribosomal_uL29"/>
    <property type="match status" value="1"/>
</dbReference>
<dbReference type="InterPro" id="IPR050063">
    <property type="entry name" value="Ribosomal_protein_uL29"/>
</dbReference>
<dbReference type="InterPro" id="IPR001854">
    <property type="entry name" value="Ribosomal_uL29"/>
</dbReference>
<dbReference type="InterPro" id="IPR018254">
    <property type="entry name" value="Ribosomal_uL29_CS"/>
</dbReference>
<dbReference type="InterPro" id="IPR036049">
    <property type="entry name" value="Ribosomal_uL29_sf"/>
</dbReference>
<dbReference type="NCBIfam" id="TIGR00012">
    <property type="entry name" value="L29"/>
    <property type="match status" value="1"/>
</dbReference>
<dbReference type="PANTHER" id="PTHR10916">
    <property type="entry name" value="60S RIBOSOMAL PROTEIN L35/50S RIBOSOMAL PROTEIN L29"/>
    <property type="match status" value="1"/>
</dbReference>
<dbReference type="PANTHER" id="PTHR10916:SF0">
    <property type="entry name" value="LARGE RIBOSOMAL SUBUNIT PROTEIN UL29C"/>
    <property type="match status" value="1"/>
</dbReference>
<dbReference type="Pfam" id="PF00831">
    <property type="entry name" value="Ribosomal_L29"/>
    <property type="match status" value="1"/>
</dbReference>
<dbReference type="SUPFAM" id="SSF46561">
    <property type="entry name" value="Ribosomal protein L29 (L29p)"/>
    <property type="match status" value="1"/>
</dbReference>
<dbReference type="PROSITE" id="PS00579">
    <property type="entry name" value="RIBOSOMAL_L29"/>
    <property type="match status" value="1"/>
</dbReference>
<keyword id="KW-0687">Ribonucleoprotein</keyword>
<keyword id="KW-0689">Ribosomal protein</keyword>
<reference key="1">
    <citation type="journal article" date="2007" name="Nat. Biotechnol.">
        <title>Comparative analysis of the complete genome sequence of the plant growth-promoting bacterium Bacillus amyloliquefaciens FZB42.</title>
        <authorList>
            <person name="Chen X.H."/>
            <person name="Koumoutsi A."/>
            <person name="Scholz R."/>
            <person name="Eisenreich A."/>
            <person name="Schneider K."/>
            <person name="Heinemeyer I."/>
            <person name="Morgenstern B."/>
            <person name="Voss B."/>
            <person name="Hess W.R."/>
            <person name="Reva O."/>
            <person name="Junge H."/>
            <person name="Voigt B."/>
            <person name="Jungblut P.R."/>
            <person name="Vater J."/>
            <person name="Suessmuth R."/>
            <person name="Liesegang H."/>
            <person name="Strittmatter A."/>
            <person name="Gottschalk G."/>
            <person name="Borriss R."/>
        </authorList>
    </citation>
    <scope>NUCLEOTIDE SEQUENCE [LARGE SCALE GENOMIC DNA]</scope>
    <source>
        <strain>DSM 23117 / BGSC 10A6 / LMG 26770 / FZB42</strain>
    </source>
</reference>
<name>RL29_BACVZ</name>
<evidence type="ECO:0000255" key="1">
    <source>
        <dbReference type="HAMAP-Rule" id="MF_00374"/>
    </source>
</evidence>
<evidence type="ECO:0000305" key="2"/>
<proteinExistence type="inferred from homology"/>
<feature type="chain" id="PRO_1000007417" description="Large ribosomal subunit protein uL29">
    <location>
        <begin position="1"/>
        <end position="66"/>
    </location>
</feature>
<organism>
    <name type="scientific">Bacillus velezensis (strain DSM 23117 / BGSC 10A6 / LMG 26770 / FZB42)</name>
    <name type="common">Bacillus amyloliquefaciens subsp. plantarum</name>
    <dbReference type="NCBI Taxonomy" id="326423"/>
    <lineage>
        <taxon>Bacteria</taxon>
        <taxon>Bacillati</taxon>
        <taxon>Bacillota</taxon>
        <taxon>Bacilli</taxon>
        <taxon>Bacillales</taxon>
        <taxon>Bacillaceae</taxon>
        <taxon>Bacillus</taxon>
        <taxon>Bacillus amyloliquefaciens group</taxon>
    </lineage>
</organism>
<sequence>MKANEIRDLTTAEIEQKVKSLKEELFNLRFQLATGQLENTARIREVRKAIARMKTVIREREIAANK</sequence>
<comment type="similarity">
    <text evidence="1">Belongs to the universal ribosomal protein uL29 family.</text>
</comment>
<accession>A7Z0P6</accession>
<protein>
    <recommendedName>
        <fullName evidence="1">Large ribosomal subunit protein uL29</fullName>
    </recommendedName>
    <alternativeName>
        <fullName evidence="2">50S ribosomal protein L29</fullName>
    </alternativeName>
</protein>